<protein>
    <recommendedName>
        <fullName evidence="1">Uridylate kinase</fullName>
        <shortName evidence="1">UK</shortName>
        <ecNumber evidence="1">2.7.4.22</ecNumber>
    </recommendedName>
    <alternativeName>
        <fullName evidence="1">Uridine monophosphate kinase</fullName>
        <shortName evidence="1">UMP kinase</shortName>
        <shortName evidence="1">UMPK</shortName>
    </alternativeName>
</protein>
<feature type="chain" id="PRO_0000143857" description="Uridylate kinase">
    <location>
        <begin position="1"/>
        <end position="242"/>
    </location>
</feature>
<feature type="region of interest" description="Involved in allosteric activation by GTP" evidence="1">
    <location>
        <begin position="20"/>
        <end position="25"/>
    </location>
</feature>
<feature type="binding site" evidence="1">
    <location>
        <begin position="12"/>
        <end position="15"/>
    </location>
    <ligand>
        <name>ATP</name>
        <dbReference type="ChEBI" id="CHEBI:30616"/>
    </ligand>
</feature>
<feature type="binding site" evidence="1">
    <location>
        <position position="54"/>
    </location>
    <ligand>
        <name>UMP</name>
        <dbReference type="ChEBI" id="CHEBI:57865"/>
    </ligand>
</feature>
<feature type="binding site" evidence="1">
    <location>
        <position position="55"/>
    </location>
    <ligand>
        <name>ATP</name>
        <dbReference type="ChEBI" id="CHEBI:30616"/>
    </ligand>
</feature>
<feature type="binding site" evidence="1">
    <location>
        <position position="59"/>
    </location>
    <ligand>
        <name>ATP</name>
        <dbReference type="ChEBI" id="CHEBI:30616"/>
    </ligand>
</feature>
<feature type="binding site" evidence="1">
    <location>
        <position position="74"/>
    </location>
    <ligand>
        <name>UMP</name>
        <dbReference type="ChEBI" id="CHEBI:57865"/>
    </ligand>
</feature>
<feature type="binding site" evidence="1">
    <location>
        <begin position="135"/>
        <end position="142"/>
    </location>
    <ligand>
        <name>UMP</name>
        <dbReference type="ChEBI" id="CHEBI:57865"/>
    </ligand>
</feature>
<feature type="binding site" evidence="1">
    <location>
        <position position="163"/>
    </location>
    <ligand>
        <name>ATP</name>
        <dbReference type="ChEBI" id="CHEBI:30616"/>
    </ligand>
</feature>
<feature type="binding site" evidence="1">
    <location>
        <position position="169"/>
    </location>
    <ligand>
        <name>ATP</name>
        <dbReference type="ChEBI" id="CHEBI:30616"/>
    </ligand>
</feature>
<feature type="binding site" evidence="1">
    <location>
        <position position="172"/>
    </location>
    <ligand>
        <name>ATP</name>
        <dbReference type="ChEBI" id="CHEBI:30616"/>
    </ligand>
</feature>
<proteinExistence type="inferred from homology"/>
<sequence>MDTPDYKRVVLKLSGEALAGNDGFGINPSVVNLISAQIKEVVELGVEVAIVVGGGNIWRGKLGSEMGMDRAAADQMGMLATIMNSLSLQDSLENIGVATRVQTSIDMRQIAEPYIRRKAIRHLEKGRVVIFAGGTGNPYFSTDTAAALRAAEIEADVILMAKNNVDGVYNADPKLDENAKKYEELSYLDVIKEGLEVMDTTASSLSMDNDIPLIVFSFTEQGNNIKRVILGEKIGTTVRGKK</sequence>
<dbReference type="EC" id="2.7.4.22" evidence="1"/>
<dbReference type="EMBL" id="AE017262">
    <property type="protein sequence ID" value="AAT04105.1"/>
    <property type="molecule type" value="Genomic_DNA"/>
</dbReference>
<dbReference type="RefSeq" id="WP_003723449.1">
    <property type="nucleotide sequence ID" value="NC_002973.6"/>
</dbReference>
<dbReference type="SMR" id="Q720A9"/>
<dbReference type="GeneID" id="93239189"/>
<dbReference type="KEGG" id="lmf:LMOf2365_1330"/>
<dbReference type="HOGENOM" id="CLU_033861_0_0_9"/>
<dbReference type="UniPathway" id="UPA00159">
    <property type="reaction ID" value="UER00275"/>
</dbReference>
<dbReference type="GO" id="GO:0005737">
    <property type="term" value="C:cytoplasm"/>
    <property type="evidence" value="ECO:0007669"/>
    <property type="project" value="UniProtKB-SubCell"/>
</dbReference>
<dbReference type="GO" id="GO:0005524">
    <property type="term" value="F:ATP binding"/>
    <property type="evidence" value="ECO:0007669"/>
    <property type="project" value="UniProtKB-KW"/>
</dbReference>
<dbReference type="GO" id="GO:0033862">
    <property type="term" value="F:UMP kinase activity"/>
    <property type="evidence" value="ECO:0007669"/>
    <property type="project" value="UniProtKB-EC"/>
</dbReference>
<dbReference type="GO" id="GO:0044210">
    <property type="term" value="P:'de novo' CTP biosynthetic process"/>
    <property type="evidence" value="ECO:0007669"/>
    <property type="project" value="UniProtKB-UniRule"/>
</dbReference>
<dbReference type="GO" id="GO:0006225">
    <property type="term" value="P:UDP biosynthetic process"/>
    <property type="evidence" value="ECO:0007669"/>
    <property type="project" value="TreeGrafter"/>
</dbReference>
<dbReference type="CDD" id="cd04254">
    <property type="entry name" value="AAK_UMPK-PyrH-Ec"/>
    <property type="match status" value="1"/>
</dbReference>
<dbReference type="FunFam" id="3.40.1160.10:FF:000001">
    <property type="entry name" value="Uridylate kinase"/>
    <property type="match status" value="1"/>
</dbReference>
<dbReference type="Gene3D" id="3.40.1160.10">
    <property type="entry name" value="Acetylglutamate kinase-like"/>
    <property type="match status" value="1"/>
</dbReference>
<dbReference type="HAMAP" id="MF_01220_B">
    <property type="entry name" value="PyrH_B"/>
    <property type="match status" value="1"/>
</dbReference>
<dbReference type="InterPro" id="IPR036393">
    <property type="entry name" value="AceGlu_kinase-like_sf"/>
</dbReference>
<dbReference type="InterPro" id="IPR001048">
    <property type="entry name" value="Asp/Glu/Uridylate_kinase"/>
</dbReference>
<dbReference type="InterPro" id="IPR011817">
    <property type="entry name" value="Uridylate_kinase"/>
</dbReference>
<dbReference type="InterPro" id="IPR015963">
    <property type="entry name" value="Uridylate_kinase_bac"/>
</dbReference>
<dbReference type="NCBIfam" id="TIGR02075">
    <property type="entry name" value="pyrH_bact"/>
    <property type="match status" value="1"/>
</dbReference>
<dbReference type="PANTHER" id="PTHR42833">
    <property type="entry name" value="URIDYLATE KINASE"/>
    <property type="match status" value="1"/>
</dbReference>
<dbReference type="PANTHER" id="PTHR42833:SF4">
    <property type="entry name" value="URIDYLATE KINASE PUMPKIN, CHLOROPLASTIC"/>
    <property type="match status" value="1"/>
</dbReference>
<dbReference type="Pfam" id="PF00696">
    <property type="entry name" value="AA_kinase"/>
    <property type="match status" value="1"/>
</dbReference>
<dbReference type="PIRSF" id="PIRSF005650">
    <property type="entry name" value="Uridylate_kin"/>
    <property type="match status" value="1"/>
</dbReference>
<dbReference type="SUPFAM" id="SSF53633">
    <property type="entry name" value="Carbamate kinase-like"/>
    <property type="match status" value="1"/>
</dbReference>
<comment type="function">
    <text evidence="1">Catalyzes the reversible phosphorylation of UMP to UDP.</text>
</comment>
<comment type="catalytic activity">
    <reaction evidence="1">
        <text>UMP + ATP = UDP + ADP</text>
        <dbReference type="Rhea" id="RHEA:24400"/>
        <dbReference type="ChEBI" id="CHEBI:30616"/>
        <dbReference type="ChEBI" id="CHEBI:57865"/>
        <dbReference type="ChEBI" id="CHEBI:58223"/>
        <dbReference type="ChEBI" id="CHEBI:456216"/>
        <dbReference type="EC" id="2.7.4.22"/>
    </reaction>
</comment>
<comment type="activity regulation">
    <text evidence="1">Allosterically activated by GTP. Inhibited by UTP.</text>
</comment>
<comment type="pathway">
    <text evidence="1">Pyrimidine metabolism; CTP biosynthesis via de novo pathway; UDP from UMP (UMPK route): step 1/1.</text>
</comment>
<comment type="subunit">
    <text evidence="1">Homohexamer.</text>
</comment>
<comment type="subcellular location">
    <subcellularLocation>
        <location evidence="1">Cytoplasm</location>
    </subcellularLocation>
</comment>
<comment type="similarity">
    <text evidence="1">Belongs to the UMP kinase family.</text>
</comment>
<evidence type="ECO:0000255" key="1">
    <source>
        <dbReference type="HAMAP-Rule" id="MF_01220"/>
    </source>
</evidence>
<keyword id="KW-0021">Allosteric enzyme</keyword>
<keyword id="KW-0067">ATP-binding</keyword>
<keyword id="KW-0963">Cytoplasm</keyword>
<keyword id="KW-0418">Kinase</keyword>
<keyword id="KW-0547">Nucleotide-binding</keyword>
<keyword id="KW-0665">Pyrimidine biosynthesis</keyword>
<keyword id="KW-0808">Transferase</keyword>
<accession>Q720A9</accession>
<organism>
    <name type="scientific">Listeria monocytogenes serotype 4b (strain F2365)</name>
    <dbReference type="NCBI Taxonomy" id="265669"/>
    <lineage>
        <taxon>Bacteria</taxon>
        <taxon>Bacillati</taxon>
        <taxon>Bacillota</taxon>
        <taxon>Bacilli</taxon>
        <taxon>Bacillales</taxon>
        <taxon>Listeriaceae</taxon>
        <taxon>Listeria</taxon>
    </lineage>
</organism>
<name>PYRH_LISMF</name>
<reference key="1">
    <citation type="journal article" date="2004" name="Nucleic Acids Res.">
        <title>Whole genome comparisons of serotype 4b and 1/2a strains of the food-borne pathogen Listeria monocytogenes reveal new insights into the core genome components of this species.</title>
        <authorList>
            <person name="Nelson K.E."/>
            <person name="Fouts D.E."/>
            <person name="Mongodin E.F."/>
            <person name="Ravel J."/>
            <person name="DeBoy R.T."/>
            <person name="Kolonay J.F."/>
            <person name="Rasko D.A."/>
            <person name="Angiuoli S.V."/>
            <person name="Gill S.R."/>
            <person name="Paulsen I.T."/>
            <person name="Peterson J.D."/>
            <person name="White O."/>
            <person name="Nelson W.C."/>
            <person name="Nierman W.C."/>
            <person name="Beanan M.J."/>
            <person name="Brinkac L.M."/>
            <person name="Daugherty S.C."/>
            <person name="Dodson R.J."/>
            <person name="Durkin A.S."/>
            <person name="Madupu R."/>
            <person name="Haft D.H."/>
            <person name="Selengut J."/>
            <person name="Van Aken S.E."/>
            <person name="Khouri H.M."/>
            <person name="Fedorova N."/>
            <person name="Forberger H.A."/>
            <person name="Tran B."/>
            <person name="Kathariou S."/>
            <person name="Wonderling L.D."/>
            <person name="Uhlich G.A."/>
            <person name="Bayles D.O."/>
            <person name="Luchansky J.B."/>
            <person name="Fraser C.M."/>
        </authorList>
    </citation>
    <scope>NUCLEOTIDE SEQUENCE [LARGE SCALE GENOMIC DNA]</scope>
    <source>
        <strain>F2365</strain>
    </source>
</reference>
<gene>
    <name evidence="1" type="primary">pyrH</name>
    <name type="ordered locus">LMOf2365_1330</name>
</gene>